<name>CCA_LACDA</name>
<sequence length="396" mass="44229">MTNIRITEVFTQAMPVLEKLEEAGFEAYFVGGCVRDLLLERPIHDVDIATSAYPEEVKETFAKSIDTGIQHGTVTVLYGGSSYEITTFRTESGYQDFRRPDKVTFVQNLDEDLKRRDFTINALAMNRQGEIIDLFDGLGDLKRRVIKAVGVAEDRFHEDALRMMRAVRFMSQLSFSLEEKTRQAIINNHELLSKISVERIREEFVKLALGKDSRQAFKDFLATGLSEECPGLAGKKDQLSVLTDLKAGPDDEAVFWSLIAVLINLPADKISPFMRAWKNSNAMNQQVRQIVAAFDLLSRGEESDFDLFEIGQENLEAALKLAGLLGKPLSSQVLLDRYNRLPIKAAGELAIDGQWLIKEGIKPSPELGQLLRKALEGVVSGQVENSQAAIAEFLAI</sequence>
<proteinExistence type="inferred from homology"/>
<evidence type="ECO:0000255" key="1">
    <source>
        <dbReference type="HAMAP-Rule" id="MF_01263"/>
    </source>
</evidence>
<reference key="1">
    <citation type="journal article" date="2006" name="Proc. Natl. Acad. Sci. U.S.A.">
        <title>The complete genome sequence of Lactobacillus bulgaricus reveals extensive and ongoing reductive evolution.</title>
        <authorList>
            <person name="van de Guchte M."/>
            <person name="Penaud S."/>
            <person name="Grimaldi C."/>
            <person name="Barbe V."/>
            <person name="Bryson K."/>
            <person name="Nicolas P."/>
            <person name="Robert C."/>
            <person name="Oztas S."/>
            <person name="Mangenot S."/>
            <person name="Couloux A."/>
            <person name="Loux V."/>
            <person name="Dervyn R."/>
            <person name="Bossy R."/>
            <person name="Bolotin A."/>
            <person name="Batto J.-M."/>
            <person name="Walunas T."/>
            <person name="Gibrat J.-F."/>
            <person name="Bessieres P."/>
            <person name="Weissenbach J."/>
            <person name="Ehrlich S.D."/>
            <person name="Maguin E."/>
        </authorList>
    </citation>
    <scope>NUCLEOTIDE SEQUENCE [LARGE SCALE GENOMIC DNA]</scope>
    <source>
        <strain>ATCC 11842 / DSM 20081 / BCRC 10696 / JCM 1002 / NBRC 13953 / NCIMB 11778 / NCTC 12712 / WDCM 00102 / Lb 14</strain>
    </source>
</reference>
<organism>
    <name type="scientific">Lactobacillus delbrueckii subsp. bulgaricus (strain ATCC 11842 / DSM 20081 / BCRC 10696 / JCM 1002 / NBRC 13953 / NCIMB 11778 / NCTC 12712 / WDCM 00102 / Lb 14)</name>
    <dbReference type="NCBI Taxonomy" id="390333"/>
    <lineage>
        <taxon>Bacteria</taxon>
        <taxon>Bacillati</taxon>
        <taxon>Bacillota</taxon>
        <taxon>Bacilli</taxon>
        <taxon>Lactobacillales</taxon>
        <taxon>Lactobacillaceae</taxon>
        <taxon>Lactobacillus</taxon>
    </lineage>
</organism>
<comment type="function">
    <text evidence="1">Catalyzes the addition and repair of the essential 3'-terminal CCA sequence in tRNAs without using a nucleic acid template. Adds these three nucleotides in the order of C, C, and A to the tRNA nucleotide-73, using CTP and ATP as substrates and producing inorganic pyrophosphate. tRNA 3'-terminal CCA addition is required both for tRNA processing and repair. Also involved in tRNA surveillance by mediating tandem CCA addition to generate a CCACCA at the 3' terminus of unstable tRNAs. While stable tRNAs receive only 3'-terminal CCA, unstable tRNAs are marked with CCACCA and rapidly degraded.</text>
</comment>
<comment type="catalytic activity">
    <reaction evidence="1">
        <text>a tRNA precursor + 2 CTP + ATP = a tRNA with a 3' CCA end + 3 diphosphate</text>
        <dbReference type="Rhea" id="RHEA:14433"/>
        <dbReference type="Rhea" id="RHEA-COMP:10465"/>
        <dbReference type="Rhea" id="RHEA-COMP:10468"/>
        <dbReference type="ChEBI" id="CHEBI:30616"/>
        <dbReference type="ChEBI" id="CHEBI:33019"/>
        <dbReference type="ChEBI" id="CHEBI:37563"/>
        <dbReference type="ChEBI" id="CHEBI:74896"/>
        <dbReference type="ChEBI" id="CHEBI:83071"/>
        <dbReference type="EC" id="2.7.7.72"/>
    </reaction>
</comment>
<comment type="catalytic activity">
    <reaction evidence="1">
        <text>a tRNA with a 3' CCA end + 2 CTP + ATP = a tRNA with a 3' CCACCA end + 3 diphosphate</text>
        <dbReference type="Rhea" id="RHEA:76235"/>
        <dbReference type="Rhea" id="RHEA-COMP:10468"/>
        <dbReference type="Rhea" id="RHEA-COMP:18655"/>
        <dbReference type="ChEBI" id="CHEBI:30616"/>
        <dbReference type="ChEBI" id="CHEBI:33019"/>
        <dbReference type="ChEBI" id="CHEBI:37563"/>
        <dbReference type="ChEBI" id="CHEBI:83071"/>
        <dbReference type="ChEBI" id="CHEBI:195187"/>
    </reaction>
    <physiologicalReaction direction="left-to-right" evidence="1">
        <dbReference type="Rhea" id="RHEA:76236"/>
    </physiologicalReaction>
</comment>
<comment type="cofactor">
    <cofactor evidence="1">
        <name>Mg(2+)</name>
        <dbReference type="ChEBI" id="CHEBI:18420"/>
    </cofactor>
</comment>
<comment type="subunit">
    <text evidence="1">Homodimer.</text>
</comment>
<comment type="miscellaneous">
    <text evidence="1">A single active site specifically recognizes both ATP and CTP and is responsible for their addition.</text>
</comment>
<comment type="similarity">
    <text evidence="1">Belongs to the tRNA nucleotidyltransferase/poly(A) polymerase family. Bacterial CCA-adding enzyme type 3 subfamily.</text>
</comment>
<protein>
    <recommendedName>
        <fullName evidence="1">CCA-adding enzyme</fullName>
        <ecNumber evidence="1">2.7.7.72</ecNumber>
    </recommendedName>
    <alternativeName>
        <fullName evidence="1">CCA tRNA nucleotidyltransferase</fullName>
    </alternativeName>
    <alternativeName>
        <fullName evidence="1">tRNA CCA-pyrophosphorylase</fullName>
    </alternativeName>
    <alternativeName>
        <fullName evidence="1">tRNA adenylyl-/cytidylyl- transferase</fullName>
    </alternativeName>
    <alternativeName>
        <fullName evidence="1">tRNA nucleotidyltransferase</fullName>
    </alternativeName>
    <alternativeName>
        <fullName evidence="1">tRNA-NT</fullName>
    </alternativeName>
</protein>
<accession>Q1G9U3</accession>
<feature type="chain" id="PRO_1000067291" description="CCA-adding enzyme">
    <location>
        <begin position="1"/>
        <end position="396"/>
    </location>
</feature>
<feature type="binding site" evidence="1">
    <location>
        <position position="32"/>
    </location>
    <ligand>
        <name>ATP</name>
        <dbReference type="ChEBI" id="CHEBI:30616"/>
    </ligand>
</feature>
<feature type="binding site" evidence="1">
    <location>
        <position position="32"/>
    </location>
    <ligand>
        <name>CTP</name>
        <dbReference type="ChEBI" id="CHEBI:37563"/>
    </ligand>
</feature>
<feature type="binding site" evidence="1">
    <location>
        <position position="35"/>
    </location>
    <ligand>
        <name>ATP</name>
        <dbReference type="ChEBI" id="CHEBI:30616"/>
    </ligand>
</feature>
<feature type="binding site" evidence="1">
    <location>
        <position position="35"/>
    </location>
    <ligand>
        <name>CTP</name>
        <dbReference type="ChEBI" id="CHEBI:37563"/>
    </ligand>
</feature>
<feature type="binding site" evidence="1">
    <location>
        <position position="45"/>
    </location>
    <ligand>
        <name>Mg(2+)</name>
        <dbReference type="ChEBI" id="CHEBI:18420"/>
    </ligand>
</feature>
<feature type="binding site" evidence="1">
    <location>
        <position position="47"/>
    </location>
    <ligand>
        <name>Mg(2+)</name>
        <dbReference type="ChEBI" id="CHEBI:18420"/>
    </ligand>
</feature>
<feature type="binding site" evidence="1">
    <location>
        <position position="116"/>
    </location>
    <ligand>
        <name>ATP</name>
        <dbReference type="ChEBI" id="CHEBI:30616"/>
    </ligand>
</feature>
<feature type="binding site" evidence="1">
    <location>
        <position position="116"/>
    </location>
    <ligand>
        <name>CTP</name>
        <dbReference type="ChEBI" id="CHEBI:37563"/>
    </ligand>
</feature>
<feature type="binding site" evidence="1">
    <location>
        <position position="159"/>
    </location>
    <ligand>
        <name>ATP</name>
        <dbReference type="ChEBI" id="CHEBI:30616"/>
    </ligand>
</feature>
<feature type="binding site" evidence="1">
    <location>
        <position position="159"/>
    </location>
    <ligand>
        <name>CTP</name>
        <dbReference type="ChEBI" id="CHEBI:37563"/>
    </ligand>
</feature>
<feature type="binding site" evidence="1">
    <location>
        <position position="162"/>
    </location>
    <ligand>
        <name>ATP</name>
        <dbReference type="ChEBI" id="CHEBI:30616"/>
    </ligand>
</feature>
<feature type="binding site" evidence="1">
    <location>
        <position position="162"/>
    </location>
    <ligand>
        <name>CTP</name>
        <dbReference type="ChEBI" id="CHEBI:37563"/>
    </ligand>
</feature>
<feature type="binding site" evidence="1">
    <location>
        <position position="165"/>
    </location>
    <ligand>
        <name>ATP</name>
        <dbReference type="ChEBI" id="CHEBI:30616"/>
    </ligand>
</feature>
<feature type="binding site" evidence="1">
    <location>
        <position position="165"/>
    </location>
    <ligand>
        <name>CTP</name>
        <dbReference type="ChEBI" id="CHEBI:37563"/>
    </ligand>
</feature>
<feature type="binding site" evidence="1">
    <location>
        <position position="168"/>
    </location>
    <ligand>
        <name>ATP</name>
        <dbReference type="ChEBI" id="CHEBI:30616"/>
    </ligand>
</feature>
<feature type="binding site" evidence="1">
    <location>
        <position position="168"/>
    </location>
    <ligand>
        <name>CTP</name>
        <dbReference type="ChEBI" id="CHEBI:37563"/>
    </ligand>
</feature>
<keyword id="KW-0067">ATP-binding</keyword>
<keyword id="KW-0460">Magnesium</keyword>
<keyword id="KW-0479">Metal-binding</keyword>
<keyword id="KW-0547">Nucleotide-binding</keyword>
<keyword id="KW-0548">Nucleotidyltransferase</keyword>
<keyword id="KW-1185">Reference proteome</keyword>
<keyword id="KW-0692">RNA repair</keyword>
<keyword id="KW-0694">RNA-binding</keyword>
<keyword id="KW-0808">Transferase</keyword>
<keyword id="KW-0819">tRNA processing</keyword>
<dbReference type="EC" id="2.7.7.72" evidence="1"/>
<dbReference type="EMBL" id="CR954253">
    <property type="protein sequence ID" value="CAI98081.1"/>
    <property type="molecule type" value="Genomic_DNA"/>
</dbReference>
<dbReference type="RefSeq" id="WP_003618685.1">
    <property type="nucleotide sequence ID" value="NZ_JQAV01000005.1"/>
</dbReference>
<dbReference type="SMR" id="Q1G9U3"/>
<dbReference type="STRING" id="390333.Ldb1280"/>
<dbReference type="KEGG" id="ldb:Ldb1280"/>
<dbReference type="PATRIC" id="fig|390333.13.peg.1627"/>
<dbReference type="eggNOG" id="COG0617">
    <property type="taxonomic scope" value="Bacteria"/>
</dbReference>
<dbReference type="HOGENOM" id="CLU_015961_3_0_9"/>
<dbReference type="BioCyc" id="LDEL390333:LDB_RS05465-MONOMER"/>
<dbReference type="Proteomes" id="UP000001259">
    <property type="component" value="Chromosome"/>
</dbReference>
<dbReference type="GO" id="GO:0005524">
    <property type="term" value="F:ATP binding"/>
    <property type="evidence" value="ECO:0007669"/>
    <property type="project" value="UniProtKB-UniRule"/>
</dbReference>
<dbReference type="GO" id="GO:0004810">
    <property type="term" value="F:CCA tRNA nucleotidyltransferase activity"/>
    <property type="evidence" value="ECO:0007669"/>
    <property type="project" value="UniProtKB-UniRule"/>
</dbReference>
<dbReference type="GO" id="GO:0000287">
    <property type="term" value="F:magnesium ion binding"/>
    <property type="evidence" value="ECO:0007669"/>
    <property type="project" value="UniProtKB-UniRule"/>
</dbReference>
<dbReference type="GO" id="GO:0000049">
    <property type="term" value="F:tRNA binding"/>
    <property type="evidence" value="ECO:0007669"/>
    <property type="project" value="UniProtKB-UniRule"/>
</dbReference>
<dbReference type="GO" id="GO:0042245">
    <property type="term" value="P:RNA repair"/>
    <property type="evidence" value="ECO:0007669"/>
    <property type="project" value="UniProtKB-KW"/>
</dbReference>
<dbReference type="GO" id="GO:0001680">
    <property type="term" value="P:tRNA 3'-terminal CCA addition"/>
    <property type="evidence" value="ECO:0007669"/>
    <property type="project" value="UniProtKB-UniRule"/>
</dbReference>
<dbReference type="CDD" id="cd05398">
    <property type="entry name" value="NT_ClassII-CCAase"/>
    <property type="match status" value="1"/>
</dbReference>
<dbReference type="Gene3D" id="1.10.110.30">
    <property type="match status" value="1"/>
</dbReference>
<dbReference type="Gene3D" id="1.10.246.80">
    <property type="match status" value="1"/>
</dbReference>
<dbReference type="Gene3D" id="1.20.58.560">
    <property type="match status" value="1"/>
</dbReference>
<dbReference type="Gene3D" id="3.30.460.10">
    <property type="entry name" value="Beta Polymerase, domain 2"/>
    <property type="match status" value="1"/>
</dbReference>
<dbReference type="HAMAP" id="MF_01263">
    <property type="entry name" value="CCA_bact_type3"/>
    <property type="match status" value="1"/>
</dbReference>
<dbReference type="InterPro" id="IPR050264">
    <property type="entry name" value="Bact_CCA-adding_enz_type3_sf"/>
</dbReference>
<dbReference type="InterPro" id="IPR032810">
    <property type="entry name" value="CCA-adding_enz_C"/>
</dbReference>
<dbReference type="InterPro" id="IPR023068">
    <property type="entry name" value="CCA-adding_enz_firmicutes"/>
</dbReference>
<dbReference type="InterPro" id="IPR043519">
    <property type="entry name" value="NT_sf"/>
</dbReference>
<dbReference type="InterPro" id="IPR002646">
    <property type="entry name" value="PolA_pol_head_dom"/>
</dbReference>
<dbReference type="InterPro" id="IPR032828">
    <property type="entry name" value="PolyA_RNA-bd"/>
</dbReference>
<dbReference type="NCBIfam" id="NF009814">
    <property type="entry name" value="PRK13299.1"/>
    <property type="match status" value="1"/>
</dbReference>
<dbReference type="PANTHER" id="PTHR46173">
    <property type="entry name" value="CCA TRNA NUCLEOTIDYLTRANSFERASE 1, MITOCHONDRIAL"/>
    <property type="match status" value="1"/>
</dbReference>
<dbReference type="PANTHER" id="PTHR46173:SF1">
    <property type="entry name" value="CCA TRNA NUCLEOTIDYLTRANSFERASE 1, MITOCHONDRIAL"/>
    <property type="match status" value="1"/>
</dbReference>
<dbReference type="Pfam" id="PF01743">
    <property type="entry name" value="PolyA_pol"/>
    <property type="match status" value="1"/>
</dbReference>
<dbReference type="Pfam" id="PF12627">
    <property type="entry name" value="PolyA_pol_RNAbd"/>
    <property type="match status" value="1"/>
</dbReference>
<dbReference type="Pfam" id="PF13735">
    <property type="entry name" value="tRNA_NucTran2_2"/>
    <property type="match status" value="1"/>
</dbReference>
<dbReference type="SUPFAM" id="SSF81301">
    <property type="entry name" value="Nucleotidyltransferase"/>
    <property type="match status" value="1"/>
</dbReference>
<dbReference type="SUPFAM" id="SSF81891">
    <property type="entry name" value="Poly A polymerase C-terminal region-like"/>
    <property type="match status" value="1"/>
</dbReference>
<gene>
    <name evidence="1" type="primary">cca</name>
    <name type="ordered locus">Ldb1280</name>
</gene>